<accession>Q6F7S6</accession>
<feature type="chain" id="PRO_0000126350" description="Small ribosomal subunit protein uS8">
    <location>
        <begin position="1"/>
        <end position="131"/>
    </location>
</feature>
<organism>
    <name type="scientific">Acinetobacter baylyi (strain ATCC 33305 / BD413 / ADP1)</name>
    <dbReference type="NCBI Taxonomy" id="62977"/>
    <lineage>
        <taxon>Bacteria</taxon>
        <taxon>Pseudomonadati</taxon>
        <taxon>Pseudomonadota</taxon>
        <taxon>Gammaproteobacteria</taxon>
        <taxon>Moraxellales</taxon>
        <taxon>Moraxellaceae</taxon>
        <taxon>Acinetobacter</taxon>
    </lineage>
</organism>
<dbReference type="EMBL" id="CR543861">
    <property type="protein sequence ID" value="CAG69889.1"/>
    <property type="molecule type" value="Genomic_DNA"/>
</dbReference>
<dbReference type="RefSeq" id="WP_004924132.1">
    <property type="nucleotide sequence ID" value="NC_005966.1"/>
</dbReference>
<dbReference type="SMR" id="Q6F7S6"/>
<dbReference type="STRING" id="202950.GCA_001485005_02950"/>
<dbReference type="GeneID" id="45235420"/>
<dbReference type="KEGG" id="aci:ACIAD3205"/>
<dbReference type="eggNOG" id="COG0096">
    <property type="taxonomic scope" value="Bacteria"/>
</dbReference>
<dbReference type="HOGENOM" id="CLU_098428_0_0_6"/>
<dbReference type="OrthoDB" id="9802617at2"/>
<dbReference type="BioCyc" id="ASP62977:ACIAD_RS14525-MONOMER"/>
<dbReference type="Proteomes" id="UP000000430">
    <property type="component" value="Chromosome"/>
</dbReference>
<dbReference type="GO" id="GO:1990904">
    <property type="term" value="C:ribonucleoprotein complex"/>
    <property type="evidence" value="ECO:0007669"/>
    <property type="project" value="UniProtKB-KW"/>
</dbReference>
<dbReference type="GO" id="GO:0005840">
    <property type="term" value="C:ribosome"/>
    <property type="evidence" value="ECO:0007669"/>
    <property type="project" value="UniProtKB-KW"/>
</dbReference>
<dbReference type="GO" id="GO:0019843">
    <property type="term" value="F:rRNA binding"/>
    <property type="evidence" value="ECO:0007669"/>
    <property type="project" value="UniProtKB-UniRule"/>
</dbReference>
<dbReference type="GO" id="GO:0003735">
    <property type="term" value="F:structural constituent of ribosome"/>
    <property type="evidence" value="ECO:0007669"/>
    <property type="project" value="InterPro"/>
</dbReference>
<dbReference type="GO" id="GO:0006412">
    <property type="term" value="P:translation"/>
    <property type="evidence" value="ECO:0007669"/>
    <property type="project" value="UniProtKB-UniRule"/>
</dbReference>
<dbReference type="FunFam" id="3.30.1370.30:FF:000002">
    <property type="entry name" value="30S ribosomal protein S8"/>
    <property type="match status" value="1"/>
</dbReference>
<dbReference type="FunFam" id="3.30.1490.10:FF:000001">
    <property type="entry name" value="30S ribosomal protein S8"/>
    <property type="match status" value="1"/>
</dbReference>
<dbReference type="Gene3D" id="3.30.1370.30">
    <property type="match status" value="1"/>
</dbReference>
<dbReference type="Gene3D" id="3.30.1490.10">
    <property type="match status" value="1"/>
</dbReference>
<dbReference type="HAMAP" id="MF_01302_B">
    <property type="entry name" value="Ribosomal_uS8_B"/>
    <property type="match status" value="1"/>
</dbReference>
<dbReference type="InterPro" id="IPR000630">
    <property type="entry name" value="Ribosomal_uS8"/>
</dbReference>
<dbReference type="InterPro" id="IPR047863">
    <property type="entry name" value="Ribosomal_uS8_CS"/>
</dbReference>
<dbReference type="InterPro" id="IPR035987">
    <property type="entry name" value="Ribosomal_uS8_sf"/>
</dbReference>
<dbReference type="NCBIfam" id="NF001109">
    <property type="entry name" value="PRK00136.1"/>
    <property type="match status" value="1"/>
</dbReference>
<dbReference type="PANTHER" id="PTHR11758">
    <property type="entry name" value="40S RIBOSOMAL PROTEIN S15A"/>
    <property type="match status" value="1"/>
</dbReference>
<dbReference type="Pfam" id="PF00410">
    <property type="entry name" value="Ribosomal_S8"/>
    <property type="match status" value="1"/>
</dbReference>
<dbReference type="SUPFAM" id="SSF56047">
    <property type="entry name" value="Ribosomal protein S8"/>
    <property type="match status" value="1"/>
</dbReference>
<dbReference type="PROSITE" id="PS00053">
    <property type="entry name" value="RIBOSOMAL_S8"/>
    <property type="match status" value="1"/>
</dbReference>
<sequence length="131" mass="14155">MSMQDTVADMLTRVRNAQMAKKQTVSMPSSKLKVAIANVLQQEGYISNVEVAQEEAKATLTLTLKYFEGKPVIETVKRVSRPGLRQYRGKDKIPSVKQGLGIAIVSTSKGIMTDRAARAAGIGGEVIAFVS</sequence>
<gene>
    <name evidence="1" type="primary">rpsH</name>
    <name type="ordered locus">ACIAD3205</name>
</gene>
<evidence type="ECO:0000255" key="1">
    <source>
        <dbReference type="HAMAP-Rule" id="MF_01302"/>
    </source>
</evidence>
<evidence type="ECO:0000305" key="2"/>
<keyword id="KW-0687">Ribonucleoprotein</keyword>
<keyword id="KW-0689">Ribosomal protein</keyword>
<keyword id="KW-0694">RNA-binding</keyword>
<keyword id="KW-0699">rRNA-binding</keyword>
<comment type="function">
    <text evidence="1">One of the primary rRNA binding proteins, it binds directly to 16S rRNA central domain where it helps coordinate assembly of the platform of the 30S subunit.</text>
</comment>
<comment type="subunit">
    <text evidence="1">Part of the 30S ribosomal subunit. Contacts proteins S5 and S12.</text>
</comment>
<comment type="similarity">
    <text evidence="1">Belongs to the universal ribosomal protein uS8 family.</text>
</comment>
<reference key="1">
    <citation type="journal article" date="2004" name="Nucleic Acids Res.">
        <title>Unique features revealed by the genome sequence of Acinetobacter sp. ADP1, a versatile and naturally transformation competent bacterium.</title>
        <authorList>
            <person name="Barbe V."/>
            <person name="Vallenet D."/>
            <person name="Fonknechten N."/>
            <person name="Kreimeyer A."/>
            <person name="Oztas S."/>
            <person name="Labarre L."/>
            <person name="Cruveiller S."/>
            <person name="Robert C."/>
            <person name="Duprat S."/>
            <person name="Wincker P."/>
            <person name="Ornston L.N."/>
            <person name="Weissenbach J."/>
            <person name="Marliere P."/>
            <person name="Cohen G.N."/>
            <person name="Medigue C."/>
        </authorList>
    </citation>
    <scope>NUCLEOTIDE SEQUENCE [LARGE SCALE GENOMIC DNA]</scope>
    <source>
        <strain>ATCC 33305 / BD413 / ADP1</strain>
    </source>
</reference>
<protein>
    <recommendedName>
        <fullName evidence="1">Small ribosomal subunit protein uS8</fullName>
    </recommendedName>
    <alternativeName>
        <fullName evidence="2">30S ribosomal protein S8</fullName>
    </alternativeName>
</protein>
<name>RS8_ACIAD</name>
<proteinExistence type="inferred from homology"/>